<accession>B4TWT0</accession>
<feature type="chain" id="PRO_1000145569" description="Glutathione-regulated potassium-efflux system ancillary protein KefF">
    <location>
        <begin position="1"/>
        <end position="176"/>
    </location>
</feature>
<feature type="binding site" evidence="1">
    <location>
        <position position="8"/>
    </location>
    <ligand>
        <name>FMN</name>
        <dbReference type="ChEBI" id="CHEBI:58210"/>
    </ligand>
</feature>
<feature type="binding site" evidence="1">
    <location>
        <begin position="14"/>
        <end position="17"/>
    </location>
    <ligand>
        <name>FMN</name>
        <dbReference type="ChEBI" id="CHEBI:58210"/>
    </ligand>
</feature>
<feature type="binding site" evidence="1">
    <location>
        <begin position="65"/>
        <end position="68"/>
    </location>
    <ligand>
        <name>FMN</name>
        <dbReference type="ChEBI" id="CHEBI:58210"/>
    </ligand>
</feature>
<feature type="binding site" evidence="1">
    <location>
        <begin position="105"/>
        <end position="108"/>
    </location>
    <ligand>
        <name>FMN</name>
        <dbReference type="ChEBI" id="CHEBI:58210"/>
    </ligand>
</feature>
<dbReference type="EC" id="1.6.5.2" evidence="1"/>
<dbReference type="EMBL" id="CP001127">
    <property type="protein sequence ID" value="ACF90468.1"/>
    <property type="molecule type" value="Genomic_DNA"/>
</dbReference>
<dbReference type="RefSeq" id="WP_000600714.1">
    <property type="nucleotide sequence ID" value="NC_011094.1"/>
</dbReference>
<dbReference type="SMR" id="B4TWT0"/>
<dbReference type="KEGG" id="sew:SeSA_A0095"/>
<dbReference type="HOGENOM" id="CLU_058643_0_2_6"/>
<dbReference type="Proteomes" id="UP000001865">
    <property type="component" value="Chromosome"/>
</dbReference>
<dbReference type="GO" id="GO:0005886">
    <property type="term" value="C:plasma membrane"/>
    <property type="evidence" value="ECO:0007669"/>
    <property type="project" value="UniProtKB-SubCell"/>
</dbReference>
<dbReference type="GO" id="GO:0009055">
    <property type="term" value="F:electron transfer activity"/>
    <property type="evidence" value="ECO:0007669"/>
    <property type="project" value="TreeGrafter"/>
</dbReference>
<dbReference type="GO" id="GO:0010181">
    <property type="term" value="F:FMN binding"/>
    <property type="evidence" value="ECO:0007669"/>
    <property type="project" value="UniProtKB-UniRule"/>
</dbReference>
<dbReference type="GO" id="GO:0050136">
    <property type="term" value="F:NADH:ubiquinone reductase (non-electrogenic) activity"/>
    <property type="evidence" value="ECO:0007669"/>
    <property type="project" value="RHEA"/>
</dbReference>
<dbReference type="GO" id="GO:0008753">
    <property type="term" value="F:NADPH dehydrogenase (quinone) activity"/>
    <property type="evidence" value="ECO:0007669"/>
    <property type="project" value="RHEA"/>
</dbReference>
<dbReference type="GO" id="GO:1901381">
    <property type="term" value="P:positive regulation of potassium ion transmembrane transport"/>
    <property type="evidence" value="ECO:0007669"/>
    <property type="project" value="UniProtKB-UniRule"/>
</dbReference>
<dbReference type="GO" id="GO:0006813">
    <property type="term" value="P:potassium ion transport"/>
    <property type="evidence" value="ECO:0007669"/>
    <property type="project" value="InterPro"/>
</dbReference>
<dbReference type="FunFam" id="3.40.50.360:FF:000008">
    <property type="entry name" value="Glutathione-regulated potassium-efflux system ancillary protein KefF"/>
    <property type="match status" value="1"/>
</dbReference>
<dbReference type="Gene3D" id="3.40.50.360">
    <property type="match status" value="1"/>
</dbReference>
<dbReference type="HAMAP" id="MF_01414">
    <property type="entry name" value="K_H_efflux_KefF"/>
    <property type="match status" value="1"/>
</dbReference>
<dbReference type="InterPro" id="IPR003680">
    <property type="entry name" value="Flavodoxin_fold"/>
</dbReference>
<dbReference type="InterPro" id="IPR029039">
    <property type="entry name" value="Flavoprotein-like_sf"/>
</dbReference>
<dbReference type="InterPro" id="IPR023948">
    <property type="entry name" value="K_H_efflux_KefF"/>
</dbReference>
<dbReference type="InterPro" id="IPR046980">
    <property type="entry name" value="KefG/KefF"/>
</dbReference>
<dbReference type="NCBIfam" id="NF002044">
    <property type="entry name" value="PRK00871.1"/>
    <property type="match status" value="1"/>
</dbReference>
<dbReference type="PANTHER" id="PTHR47307:SF2">
    <property type="entry name" value="GLUTATHIONE-REGULATED POTASSIUM-EFFLUX SYSTEM ANCILLARY PROTEIN KEFF"/>
    <property type="match status" value="1"/>
</dbReference>
<dbReference type="PANTHER" id="PTHR47307">
    <property type="entry name" value="GLUTATHIONE-REGULATED POTASSIUM-EFFLUX SYSTEM ANCILLARY PROTEIN KEFG"/>
    <property type="match status" value="1"/>
</dbReference>
<dbReference type="Pfam" id="PF02525">
    <property type="entry name" value="Flavodoxin_2"/>
    <property type="match status" value="1"/>
</dbReference>
<dbReference type="SUPFAM" id="SSF52218">
    <property type="entry name" value="Flavoproteins"/>
    <property type="match status" value="1"/>
</dbReference>
<reference key="1">
    <citation type="journal article" date="2011" name="J. Bacteriol.">
        <title>Comparative genomics of 28 Salmonella enterica isolates: evidence for CRISPR-mediated adaptive sublineage evolution.</title>
        <authorList>
            <person name="Fricke W.F."/>
            <person name="Mammel M.K."/>
            <person name="McDermott P.F."/>
            <person name="Tartera C."/>
            <person name="White D.G."/>
            <person name="Leclerc J.E."/>
            <person name="Ravel J."/>
            <person name="Cebula T.A."/>
        </authorList>
    </citation>
    <scope>NUCLEOTIDE SEQUENCE [LARGE SCALE GENOMIC DNA]</scope>
    <source>
        <strain>CVM19633</strain>
    </source>
</reference>
<gene>
    <name evidence="1" type="primary">kefF</name>
    <name type="ordered locus">SeSA_A0095</name>
</gene>
<evidence type="ECO:0000255" key="1">
    <source>
        <dbReference type="HAMAP-Rule" id="MF_01414"/>
    </source>
</evidence>
<keyword id="KW-0997">Cell inner membrane</keyword>
<keyword id="KW-1003">Cell membrane</keyword>
<keyword id="KW-0285">Flavoprotein</keyword>
<keyword id="KW-0288">FMN</keyword>
<keyword id="KW-0472">Membrane</keyword>
<keyword id="KW-0520">NAD</keyword>
<keyword id="KW-0560">Oxidoreductase</keyword>
<protein>
    <recommendedName>
        <fullName evidence="1">Glutathione-regulated potassium-efflux system ancillary protein KefF</fullName>
    </recommendedName>
    <alternativeName>
        <fullName evidence="1">Quinone oxidoreductase KefF</fullName>
        <ecNumber evidence="1">1.6.5.2</ecNumber>
    </alternativeName>
</protein>
<sequence>MILIIYAHPYPHHSHANKRMLEQAGTLENVEIRSLYHLYPDFNIDVAAEQEVLSRASLIVWQHPMQWYSVPPLLKLWMDKVLTHGWAYGHGGTALHGKHLLWAVTTGGGENHFAIGSHPGFDVLSQPLQATALYCGLKWLPPFAMHCTFICDDDTLQAQARQYKQRLLTWQEVNHG</sequence>
<comment type="function">
    <text evidence="1">Regulatory subunit of a potassium efflux system that confers protection against electrophiles. Required for full activity of KefC. Shows redox enzymatic activity, but this enzymatic activity is not required for activation of KefC.</text>
</comment>
<comment type="catalytic activity">
    <reaction evidence="1">
        <text>a quinone + NADH + H(+) = a quinol + NAD(+)</text>
        <dbReference type="Rhea" id="RHEA:46160"/>
        <dbReference type="ChEBI" id="CHEBI:15378"/>
        <dbReference type="ChEBI" id="CHEBI:24646"/>
        <dbReference type="ChEBI" id="CHEBI:57540"/>
        <dbReference type="ChEBI" id="CHEBI:57945"/>
        <dbReference type="ChEBI" id="CHEBI:132124"/>
        <dbReference type="EC" id="1.6.5.2"/>
    </reaction>
</comment>
<comment type="catalytic activity">
    <reaction evidence="1">
        <text>a quinone + NADPH + H(+) = a quinol + NADP(+)</text>
        <dbReference type="Rhea" id="RHEA:46164"/>
        <dbReference type="ChEBI" id="CHEBI:15378"/>
        <dbReference type="ChEBI" id="CHEBI:24646"/>
        <dbReference type="ChEBI" id="CHEBI:57783"/>
        <dbReference type="ChEBI" id="CHEBI:58349"/>
        <dbReference type="ChEBI" id="CHEBI:132124"/>
        <dbReference type="EC" id="1.6.5.2"/>
    </reaction>
</comment>
<comment type="cofactor">
    <cofactor evidence="1">
        <name>FMN</name>
        <dbReference type="ChEBI" id="CHEBI:58210"/>
    </cofactor>
</comment>
<comment type="subunit">
    <text evidence="1">Homodimer. Interacts with KefC.</text>
</comment>
<comment type="subcellular location">
    <subcellularLocation>
        <location evidence="1">Cell inner membrane</location>
        <topology evidence="1">Peripheral membrane protein</topology>
        <orientation evidence="1">Cytoplasmic side</orientation>
    </subcellularLocation>
</comment>
<comment type="similarity">
    <text evidence="1">Belongs to the NAD(P)H dehydrogenase (quinone) family. KefF subfamily.</text>
</comment>
<proteinExistence type="inferred from homology"/>
<organism>
    <name type="scientific">Salmonella schwarzengrund (strain CVM19633)</name>
    <dbReference type="NCBI Taxonomy" id="439843"/>
    <lineage>
        <taxon>Bacteria</taxon>
        <taxon>Pseudomonadati</taxon>
        <taxon>Pseudomonadota</taxon>
        <taxon>Gammaproteobacteria</taxon>
        <taxon>Enterobacterales</taxon>
        <taxon>Enterobacteriaceae</taxon>
        <taxon>Salmonella</taxon>
    </lineage>
</organism>
<name>KEFF_SALSV</name>